<organism>
    <name type="scientific">Shewanella sp. (strain MR-7)</name>
    <dbReference type="NCBI Taxonomy" id="60481"/>
    <lineage>
        <taxon>Bacteria</taxon>
        <taxon>Pseudomonadati</taxon>
        <taxon>Pseudomonadota</taxon>
        <taxon>Gammaproteobacteria</taxon>
        <taxon>Alteromonadales</taxon>
        <taxon>Shewanellaceae</taxon>
        <taxon>Shewanella</taxon>
    </lineage>
</organism>
<accession>Q0I0K7</accession>
<proteinExistence type="inferred from homology"/>
<reference key="1">
    <citation type="submission" date="2006-08" db="EMBL/GenBank/DDBJ databases">
        <title>Complete sequence of chromosome 1 of Shewanella sp. MR-7.</title>
        <authorList>
            <person name="Copeland A."/>
            <person name="Lucas S."/>
            <person name="Lapidus A."/>
            <person name="Barry K."/>
            <person name="Detter J.C."/>
            <person name="Glavina del Rio T."/>
            <person name="Hammon N."/>
            <person name="Israni S."/>
            <person name="Dalin E."/>
            <person name="Tice H."/>
            <person name="Pitluck S."/>
            <person name="Kiss H."/>
            <person name="Brettin T."/>
            <person name="Bruce D."/>
            <person name="Han C."/>
            <person name="Tapia R."/>
            <person name="Gilna P."/>
            <person name="Schmutz J."/>
            <person name="Larimer F."/>
            <person name="Land M."/>
            <person name="Hauser L."/>
            <person name="Kyrpides N."/>
            <person name="Mikhailova N."/>
            <person name="Nealson K."/>
            <person name="Konstantinidis K."/>
            <person name="Klappenbach J."/>
            <person name="Tiedje J."/>
            <person name="Richardson P."/>
        </authorList>
    </citation>
    <scope>NUCLEOTIDE SEQUENCE [LARGE SCALE GENOMIC DNA]</scope>
    <source>
        <strain>MR-7</strain>
    </source>
</reference>
<sequence length="408" mass="43857">MSWDQVWIDVNVATMDPSISAPYGAITNAAIAVKDGKIAWLGPRSELPAFDVLSIPVYRGKGGWITPGLIDAHTHLVFAGNRANEFELRLKGATYEEIARAGGGIISTVNACREADEAELFDLGRQRLNALAKEGVTTVEIKSGYGLDTETELKILRVARELGQHHHVDVKTTFLGAHAVPPEFKDNSDGYVDLIINKMLPAVIAENLADAVDVFCENIAFNLEQTERVLSAAKAAGLQVKLHAEQLSNMGGSELAARLGAKSVDHIEYLDEAGVKALSESGTCAVLLPGAFYFLRETQKPPIDLLRQYGVPMVLASDFNPGSSPICSTLLMLNMGCTLFRLTPEEALAGLTLNAAKALGIEENVGSLVVGKQADFCLWDIATPAQLAYSYGVNPCKDVVKNGKLVHQ</sequence>
<feature type="chain" id="PRO_0000306513" description="Imidazolonepropionase">
    <location>
        <begin position="1"/>
        <end position="408"/>
    </location>
</feature>
<feature type="binding site" evidence="1">
    <location>
        <position position="73"/>
    </location>
    <ligand>
        <name>Fe(3+)</name>
        <dbReference type="ChEBI" id="CHEBI:29034"/>
    </ligand>
</feature>
<feature type="binding site" evidence="1">
    <location>
        <position position="73"/>
    </location>
    <ligand>
        <name>Zn(2+)</name>
        <dbReference type="ChEBI" id="CHEBI:29105"/>
    </ligand>
</feature>
<feature type="binding site" evidence="1">
    <location>
        <position position="75"/>
    </location>
    <ligand>
        <name>Fe(3+)</name>
        <dbReference type="ChEBI" id="CHEBI:29034"/>
    </ligand>
</feature>
<feature type="binding site" evidence="1">
    <location>
        <position position="75"/>
    </location>
    <ligand>
        <name>Zn(2+)</name>
        <dbReference type="ChEBI" id="CHEBI:29105"/>
    </ligand>
</feature>
<feature type="binding site" evidence="1">
    <location>
        <position position="82"/>
    </location>
    <ligand>
        <name>4-imidazolone-5-propanoate</name>
        <dbReference type="ChEBI" id="CHEBI:77893"/>
    </ligand>
</feature>
<feature type="binding site" evidence="1">
    <location>
        <position position="145"/>
    </location>
    <ligand>
        <name>4-imidazolone-5-propanoate</name>
        <dbReference type="ChEBI" id="CHEBI:77893"/>
    </ligand>
</feature>
<feature type="binding site" evidence="1">
    <location>
        <position position="145"/>
    </location>
    <ligand>
        <name>N-formimidoyl-L-glutamate</name>
        <dbReference type="ChEBI" id="CHEBI:58928"/>
    </ligand>
</feature>
<feature type="binding site" evidence="1">
    <location>
        <position position="178"/>
    </location>
    <ligand>
        <name>4-imidazolone-5-propanoate</name>
        <dbReference type="ChEBI" id="CHEBI:77893"/>
    </ligand>
</feature>
<feature type="binding site" evidence="1">
    <location>
        <position position="243"/>
    </location>
    <ligand>
        <name>Fe(3+)</name>
        <dbReference type="ChEBI" id="CHEBI:29034"/>
    </ligand>
</feature>
<feature type="binding site" evidence="1">
    <location>
        <position position="243"/>
    </location>
    <ligand>
        <name>Zn(2+)</name>
        <dbReference type="ChEBI" id="CHEBI:29105"/>
    </ligand>
</feature>
<feature type="binding site" evidence="1">
    <location>
        <position position="246"/>
    </location>
    <ligand>
        <name>4-imidazolone-5-propanoate</name>
        <dbReference type="ChEBI" id="CHEBI:77893"/>
    </ligand>
</feature>
<feature type="binding site" evidence="1">
    <location>
        <position position="318"/>
    </location>
    <ligand>
        <name>Fe(3+)</name>
        <dbReference type="ChEBI" id="CHEBI:29034"/>
    </ligand>
</feature>
<feature type="binding site" evidence="1">
    <location>
        <position position="318"/>
    </location>
    <ligand>
        <name>Zn(2+)</name>
        <dbReference type="ChEBI" id="CHEBI:29105"/>
    </ligand>
</feature>
<feature type="binding site" evidence="1">
    <location>
        <position position="320"/>
    </location>
    <ligand>
        <name>N-formimidoyl-L-glutamate</name>
        <dbReference type="ChEBI" id="CHEBI:58928"/>
    </ligand>
</feature>
<feature type="binding site" evidence="1">
    <location>
        <position position="322"/>
    </location>
    <ligand>
        <name>N-formimidoyl-L-glutamate</name>
        <dbReference type="ChEBI" id="CHEBI:58928"/>
    </ligand>
</feature>
<feature type="binding site" evidence="1">
    <location>
        <position position="323"/>
    </location>
    <ligand>
        <name>4-imidazolone-5-propanoate</name>
        <dbReference type="ChEBI" id="CHEBI:77893"/>
    </ligand>
</feature>
<dbReference type="EC" id="3.5.2.7" evidence="1"/>
<dbReference type="EMBL" id="CP000444">
    <property type="protein sequence ID" value="ABI41098.1"/>
    <property type="molecule type" value="Genomic_DNA"/>
</dbReference>
<dbReference type="SMR" id="Q0I0K7"/>
<dbReference type="KEGG" id="shm:Shewmr7_0092"/>
<dbReference type="HOGENOM" id="CLU_041647_0_0_6"/>
<dbReference type="UniPathway" id="UPA00379">
    <property type="reaction ID" value="UER00551"/>
</dbReference>
<dbReference type="GO" id="GO:0005737">
    <property type="term" value="C:cytoplasm"/>
    <property type="evidence" value="ECO:0007669"/>
    <property type="project" value="UniProtKB-SubCell"/>
</dbReference>
<dbReference type="GO" id="GO:0050480">
    <property type="term" value="F:imidazolonepropionase activity"/>
    <property type="evidence" value="ECO:0007669"/>
    <property type="project" value="UniProtKB-UniRule"/>
</dbReference>
<dbReference type="GO" id="GO:0005506">
    <property type="term" value="F:iron ion binding"/>
    <property type="evidence" value="ECO:0007669"/>
    <property type="project" value="UniProtKB-UniRule"/>
</dbReference>
<dbReference type="GO" id="GO:0008270">
    <property type="term" value="F:zinc ion binding"/>
    <property type="evidence" value="ECO:0007669"/>
    <property type="project" value="UniProtKB-UniRule"/>
</dbReference>
<dbReference type="GO" id="GO:0019556">
    <property type="term" value="P:L-histidine catabolic process to glutamate and formamide"/>
    <property type="evidence" value="ECO:0007669"/>
    <property type="project" value="UniProtKB-UniPathway"/>
</dbReference>
<dbReference type="GO" id="GO:0019557">
    <property type="term" value="P:L-histidine catabolic process to glutamate and formate"/>
    <property type="evidence" value="ECO:0007669"/>
    <property type="project" value="UniProtKB-UniPathway"/>
</dbReference>
<dbReference type="CDD" id="cd01296">
    <property type="entry name" value="Imidazolone-5PH"/>
    <property type="match status" value="1"/>
</dbReference>
<dbReference type="FunFam" id="3.20.20.140:FF:000007">
    <property type="entry name" value="Imidazolonepropionase"/>
    <property type="match status" value="1"/>
</dbReference>
<dbReference type="Gene3D" id="3.20.20.140">
    <property type="entry name" value="Metal-dependent hydrolases"/>
    <property type="match status" value="1"/>
</dbReference>
<dbReference type="Gene3D" id="2.30.40.10">
    <property type="entry name" value="Urease, subunit C, domain 1"/>
    <property type="match status" value="1"/>
</dbReference>
<dbReference type="HAMAP" id="MF_00372">
    <property type="entry name" value="HutI"/>
    <property type="match status" value="1"/>
</dbReference>
<dbReference type="InterPro" id="IPR006680">
    <property type="entry name" value="Amidohydro-rel"/>
</dbReference>
<dbReference type="InterPro" id="IPR005920">
    <property type="entry name" value="HutI"/>
</dbReference>
<dbReference type="InterPro" id="IPR011059">
    <property type="entry name" value="Metal-dep_hydrolase_composite"/>
</dbReference>
<dbReference type="InterPro" id="IPR032466">
    <property type="entry name" value="Metal_Hydrolase"/>
</dbReference>
<dbReference type="NCBIfam" id="TIGR01224">
    <property type="entry name" value="hutI"/>
    <property type="match status" value="1"/>
</dbReference>
<dbReference type="PANTHER" id="PTHR42752">
    <property type="entry name" value="IMIDAZOLONEPROPIONASE"/>
    <property type="match status" value="1"/>
</dbReference>
<dbReference type="PANTHER" id="PTHR42752:SF1">
    <property type="entry name" value="IMIDAZOLONEPROPIONASE-RELATED"/>
    <property type="match status" value="1"/>
</dbReference>
<dbReference type="Pfam" id="PF01979">
    <property type="entry name" value="Amidohydro_1"/>
    <property type="match status" value="1"/>
</dbReference>
<dbReference type="SUPFAM" id="SSF51338">
    <property type="entry name" value="Composite domain of metallo-dependent hydrolases"/>
    <property type="match status" value="1"/>
</dbReference>
<dbReference type="SUPFAM" id="SSF51556">
    <property type="entry name" value="Metallo-dependent hydrolases"/>
    <property type="match status" value="1"/>
</dbReference>
<evidence type="ECO:0000255" key="1">
    <source>
        <dbReference type="HAMAP-Rule" id="MF_00372"/>
    </source>
</evidence>
<comment type="function">
    <text evidence="1">Catalyzes the hydrolytic cleavage of the carbon-nitrogen bond in imidazolone-5-propanoate to yield N-formimidoyl-L-glutamate. It is the third step in the universal histidine degradation pathway.</text>
</comment>
<comment type="catalytic activity">
    <reaction evidence="1">
        <text>4-imidazolone-5-propanoate + H2O = N-formimidoyl-L-glutamate</text>
        <dbReference type="Rhea" id="RHEA:23660"/>
        <dbReference type="ChEBI" id="CHEBI:15377"/>
        <dbReference type="ChEBI" id="CHEBI:58928"/>
        <dbReference type="ChEBI" id="CHEBI:77893"/>
        <dbReference type="EC" id="3.5.2.7"/>
    </reaction>
</comment>
<comment type="cofactor">
    <cofactor evidence="1">
        <name>Zn(2+)</name>
        <dbReference type="ChEBI" id="CHEBI:29105"/>
    </cofactor>
    <cofactor evidence="1">
        <name>Fe(3+)</name>
        <dbReference type="ChEBI" id="CHEBI:29034"/>
    </cofactor>
    <text evidence="1">Binds 1 zinc or iron ion per subunit.</text>
</comment>
<comment type="pathway">
    <text evidence="1">Amino-acid degradation; L-histidine degradation into L-glutamate; N-formimidoyl-L-glutamate from L-histidine: step 3/3.</text>
</comment>
<comment type="subcellular location">
    <subcellularLocation>
        <location evidence="1">Cytoplasm</location>
    </subcellularLocation>
</comment>
<comment type="similarity">
    <text evidence="1">Belongs to the metallo-dependent hydrolases superfamily. HutI family.</text>
</comment>
<name>HUTI_SHESR</name>
<keyword id="KW-0963">Cytoplasm</keyword>
<keyword id="KW-0369">Histidine metabolism</keyword>
<keyword id="KW-0378">Hydrolase</keyword>
<keyword id="KW-0408">Iron</keyword>
<keyword id="KW-0479">Metal-binding</keyword>
<keyword id="KW-0862">Zinc</keyword>
<protein>
    <recommendedName>
        <fullName evidence="1">Imidazolonepropionase</fullName>
        <ecNumber evidence="1">3.5.2.7</ecNumber>
    </recommendedName>
    <alternativeName>
        <fullName evidence="1">Imidazolone-5-propionate hydrolase</fullName>
    </alternativeName>
</protein>
<gene>
    <name evidence="1" type="primary">hutI</name>
    <name type="ordered locus">Shewmr7_0092</name>
</gene>